<proteinExistence type="evidence at protein level"/>
<protein>
    <recommendedName>
        <fullName>Guanine nucleotide-binding protein G(I)/G(S)/G(O) subunit gamma-4</fullName>
    </recommendedName>
</protein>
<feature type="chain" id="PRO_0000012621" description="Guanine nucleotide-binding protein G(I)/G(S)/G(O) subunit gamma-4">
    <location>
        <begin position="1"/>
        <end position="72"/>
    </location>
</feature>
<feature type="propeptide" id="PRO_0000012622" description="Removed in mature form">
    <location>
        <begin position="73"/>
        <end position="75"/>
    </location>
</feature>
<feature type="modified residue" description="Cysteine methyl ester" evidence="2">
    <location>
        <position position="72"/>
    </location>
</feature>
<feature type="lipid moiety-binding region" description="S-geranylgeranyl cysteine" evidence="2">
    <location>
        <position position="72"/>
    </location>
</feature>
<dbReference type="EMBL" id="U31382">
    <property type="protein sequence ID" value="AAC50204.1"/>
    <property type="molecule type" value="mRNA"/>
</dbReference>
<dbReference type="EMBL" id="AF493872">
    <property type="protein sequence ID" value="AAM12586.1"/>
    <property type="molecule type" value="mRNA"/>
</dbReference>
<dbReference type="EMBL" id="BC022485">
    <property type="protein sequence ID" value="AAH22485.1"/>
    <property type="molecule type" value="mRNA"/>
</dbReference>
<dbReference type="CCDS" id="CCDS1607.1"/>
<dbReference type="PIR" id="I39157">
    <property type="entry name" value="I39157"/>
</dbReference>
<dbReference type="RefSeq" id="NP_001092191.1">
    <property type="nucleotide sequence ID" value="NM_001098721.2"/>
</dbReference>
<dbReference type="RefSeq" id="NP_001092192.1">
    <property type="nucleotide sequence ID" value="NM_001098722.2"/>
</dbReference>
<dbReference type="RefSeq" id="NP_004476.1">
    <property type="nucleotide sequence ID" value="NM_004485.4"/>
</dbReference>
<dbReference type="RefSeq" id="XP_006711824.1">
    <property type="nucleotide sequence ID" value="XM_006711761.3"/>
</dbReference>
<dbReference type="RefSeq" id="XP_011542469.1">
    <property type="nucleotide sequence ID" value="XM_011544167.2"/>
</dbReference>
<dbReference type="RefSeq" id="XP_047274040.1">
    <property type="nucleotide sequence ID" value="XM_047418084.1"/>
</dbReference>
<dbReference type="RefSeq" id="XP_054192062.1">
    <property type="nucleotide sequence ID" value="XM_054336087.1"/>
</dbReference>
<dbReference type="RefSeq" id="XP_054192063.1">
    <property type="nucleotide sequence ID" value="XM_054336088.1"/>
</dbReference>
<dbReference type="RefSeq" id="XP_054192064.1">
    <property type="nucleotide sequence ID" value="XM_054336089.1"/>
</dbReference>
<dbReference type="SMR" id="P50150"/>
<dbReference type="BioGRID" id="109048">
    <property type="interactions" value="26"/>
</dbReference>
<dbReference type="CORUM" id="P50150"/>
<dbReference type="FunCoup" id="P50150">
    <property type="interactions" value="1465"/>
</dbReference>
<dbReference type="IntAct" id="P50150">
    <property type="interactions" value="18"/>
</dbReference>
<dbReference type="STRING" id="9606.ENSP00000398629"/>
<dbReference type="iPTMnet" id="P50150"/>
<dbReference type="PhosphoSitePlus" id="P50150"/>
<dbReference type="BioMuta" id="GNG4"/>
<dbReference type="DMDM" id="1730219"/>
<dbReference type="jPOST" id="P50150"/>
<dbReference type="MassIVE" id="P50150"/>
<dbReference type="PaxDb" id="9606-ENSP00000375727"/>
<dbReference type="PeptideAtlas" id="P50150"/>
<dbReference type="ProteomicsDB" id="56199"/>
<dbReference type="Pumba" id="P50150"/>
<dbReference type="Antibodypedia" id="34696">
    <property type="antibodies" value="94 antibodies from 23 providers"/>
</dbReference>
<dbReference type="DNASU" id="2786"/>
<dbReference type="Ensembl" id="ENST00000366597.5">
    <property type="protein sequence ID" value="ENSP00000355556.1"/>
    <property type="gene ID" value="ENSG00000168243.11"/>
</dbReference>
<dbReference type="Ensembl" id="ENST00000366598.8">
    <property type="protein sequence ID" value="ENSP00000355557.4"/>
    <property type="gene ID" value="ENSG00000168243.11"/>
</dbReference>
<dbReference type="Ensembl" id="ENST00000391854.7">
    <property type="protein sequence ID" value="ENSP00000375727.2"/>
    <property type="gene ID" value="ENSG00000168243.11"/>
</dbReference>
<dbReference type="Ensembl" id="ENST00000450593.5">
    <property type="protein sequence ID" value="ENSP00000398629.1"/>
    <property type="gene ID" value="ENSG00000168243.11"/>
</dbReference>
<dbReference type="Ensembl" id="ENST00000484517.2">
    <property type="protein sequence ID" value="ENSP00000482192.1"/>
    <property type="gene ID" value="ENSG00000168243.11"/>
</dbReference>
<dbReference type="GeneID" id="2786"/>
<dbReference type="KEGG" id="hsa:2786"/>
<dbReference type="MANE-Select" id="ENST00000391854.7">
    <property type="protein sequence ID" value="ENSP00000375727.2"/>
    <property type="RefSeq nucleotide sequence ID" value="NM_001098722.2"/>
    <property type="RefSeq protein sequence ID" value="NP_001092192.1"/>
</dbReference>
<dbReference type="UCSC" id="uc001hxe.5">
    <property type="organism name" value="human"/>
</dbReference>
<dbReference type="AGR" id="HGNC:4407"/>
<dbReference type="CTD" id="2786"/>
<dbReference type="DisGeNET" id="2786"/>
<dbReference type="GeneCards" id="GNG4"/>
<dbReference type="HGNC" id="HGNC:4407">
    <property type="gene designation" value="GNG4"/>
</dbReference>
<dbReference type="HPA" id="ENSG00000168243">
    <property type="expression patterns" value="Tissue enhanced (brain, ovary, pituitary gland)"/>
</dbReference>
<dbReference type="MIM" id="604388">
    <property type="type" value="gene"/>
</dbReference>
<dbReference type="neXtProt" id="NX_P50150"/>
<dbReference type="OpenTargets" id="ENSG00000168243"/>
<dbReference type="PharmGKB" id="PA28786"/>
<dbReference type="VEuPathDB" id="HostDB:ENSG00000168243"/>
<dbReference type="eggNOG" id="KOG4119">
    <property type="taxonomic scope" value="Eukaryota"/>
</dbReference>
<dbReference type="GeneTree" id="ENSGT01100000263497"/>
<dbReference type="HOGENOM" id="CLU_168377_0_1_1"/>
<dbReference type="InParanoid" id="P50150"/>
<dbReference type="OMA" id="TFACFRG"/>
<dbReference type="OrthoDB" id="6264244at2759"/>
<dbReference type="PAN-GO" id="P50150">
    <property type="GO annotations" value="3 GO annotations based on evolutionary models"/>
</dbReference>
<dbReference type="PhylomeDB" id="P50150"/>
<dbReference type="TreeFam" id="TF319909"/>
<dbReference type="PathwayCommons" id="P50150"/>
<dbReference type="Reactome" id="R-HSA-1296041">
    <property type="pathway name" value="Activation of G protein gated Potassium channels"/>
</dbReference>
<dbReference type="Reactome" id="R-HSA-163359">
    <property type="pathway name" value="Glucagon signaling in metabolic regulation"/>
</dbReference>
<dbReference type="Reactome" id="R-HSA-202040">
    <property type="pathway name" value="G-protein activation"/>
</dbReference>
<dbReference type="Reactome" id="R-HSA-381676">
    <property type="pathway name" value="Glucagon-like Peptide-1 (GLP1) regulates insulin secretion"/>
</dbReference>
<dbReference type="Reactome" id="R-HSA-392170">
    <property type="pathway name" value="ADP signalling through P2Y purinoceptor 12"/>
</dbReference>
<dbReference type="Reactome" id="R-HSA-392451">
    <property type="pathway name" value="G beta:gamma signalling through PI3Kgamma"/>
</dbReference>
<dbReference type="Reactome" id="R-HSA-392851">
    <property type="pathway name" value="Prostacyclin signalling through prostacyclin receptor"/>
</dbReference>
<dbReference type="Reactome" id="R-HSA-400042">
    <property type="pathway name" value="Adrenaline,noradrenaline inhibits insulin secretion"/>
</dbReference>
<dbReference type="Reactome" id="R-HSA-4086398">
    <property type="pathway name" value="Ca2+ pathway"/>
</dbReference>
<dbReference type="Reactome" id="R-HSA-416476">
    <property type="pathway name" value="G alpha (q) signalling events"/>
</dbReference>
<dbReference type="Reactome" id="R-HSA-416482">
    <property type="pathway name" value="G alpha (12/13) signalling events"/>
</dbReference>
<dbReference type="Reactome" id="R-HSA-418217">
    <property type="pathway name" value="G beta:gamma signalling through PLC beta"/>
</dbReference>
<dbReference type="Reactome" id="R-HSA-418555">
    <property type="pathway name" value="G alpha (s) signalling events"/>
</dbReference>
<dbReference type="Reactome" id="R-HSA-418592">
    <property type="pathway name" value="ADP signalling through P2Y purinoceptor 1"/>
</dbReference>
<dbReference type="Reactome" id="R-HSA-418594">
    <property type="pathway name" value="G alpha (i) signalling events"/>
</dbReference>
<dbReference type="Reactome" id="R-HSA-418597">
    <property type="pathway name" value="G alpha (z) signalling events"/>
</dbReference>
<dbReference type="Reactome" id="R-HSA-420092">
    <property type="pathway name" value="Glucagon-type ligand receptors"/>
</dbReference>
<dbReference type="Reactome" id="R-HSA-428930">
    <property type="pathway name" value="Thromboxane signalling through TP receptor"/>
</dbReference>
<dbReference type="Reactome" id="R-HSA-432040">
    <property type="pathway name" value="Vasopressin regulates renal water homeostasis via Aquaporins"/>
</dbReference>
<dbReference type="Reactome" id="R-HSA-456926">
    <property type="pathway name" value="Thrombin signalling through proteinase activated receptors (PARs)"/>
</dbReference>
<dbReference type="Reactome" id="R-HSA-500657">
    <property type="pathway name" value="Presynaptic function of Kainate receptors"/>
</dbReference>
<dbReference type="Reactome" id="R-HSA-6814122">
    <property type="pathway name" value="Cooperation of PDCL (PhLP1) and TRiC/CCT in G-protein beta folding"/>
</dbReference>
<dbReference type="Reactome" id="R-HSA-8964315">
    <property type="pathway name" value="G beta:gamma signalling through BTK"/>
</dbReference>
<dbReference type="Reactome" id="R-HSA-8964616">
    <property type="pathway name" value="G beta:gamma signalling through CDC42"/>
</dbReference>
<dbReference type="Reactome" id="R-HSA-9009391">
    <property type="pathway name" value="Extra-nuclear estrogen signaling"/>
</dbReference>
<dbReference type="Reactome" id="R-HSA-9634597">
    <property type="pathway name" value="GPER1 signaling"/>
</dbReference>
<dbReference type="Reactome" id="R-HSA-9660821">
    <property type="pathway name" value="ADORA2B mediated anti-inflammatory cytokines production"/>
</dbReference>
<dbReference type="Reactome" id="R-HSA-9856530">
    <property type="pathway name" value="High laminar flow shear stress activates signaling by PIEZO1 and PECAM1:CDH5:KDR in endothelial cells"/>
</dbReference>
<dbReference type="Reactome" id="R-HSA-997272">
    <property type="pathway name" value="Inhibition of voltage gated Ca2+ channels via Gbeta/gamma subunits"/>
</dbReference>
<dbReference type="SignaLink" id="P50150"/>
<dbReference type="BioGRID-ORCS" id="2786">
    <property type="hits" value="13 hits in 1146 CRISPR screens"/>
</dbReference>
<dbReference type="ChiTaRS" id="GNG4">
    <property type="organism name" value="human"/>
</dbReference>
<dbReference type="GenomeRNAi" id="2786"/>
<dbReference type="Pharos" id="P50150">
    <property type="development level" value="Tbio"/>
</dbReference>
<dbReference type="PRO" id="PR:P50150"/>
<dbReference type="Proteomes" id="UP000005640">
    <property type="component" value="Chromosome 1"/>
</dbReference>
<dbReference type="RNAct" id="P50150">
    <property type="molecule type" value="protein"/>
</dbReference>
<dbReference type="Bgee" id="ENSG00000168243">
    <property type="expression patterns" value="Expressed in ganglionic eminence and 91 other cell types or tissues"/>
</dbReference>
<dbReference type="ExpressionAtlas" id="P50150">
    <property type="expression patterns" value="baseline and differential"/>
</dbReference>
<dbReference type="GO" id="GO:0070062">
    <property type="term" value="C:extracellular exosome"/>
    <property type="evidence" value="ECO:0007005"/>
    <property type="project" value="UniProtKB"/>
</dbReference>
<dbReference type="GO" id="GO:0005834">
    <property type="term" value="C:heterotrimeric G-protein complex"/>
    <property type="evidence" value="ECO:0000318"/>
    <property type="project" value="GO_Central"/>
</dbReference>
<dbReference type="GO" id="GO:0005886">
    <property type="term" value="C:plasma membrane"/>
    <property type="evidence" value="ECO:0000304"/>
    <property type="project" value="Reactome"/>
</dbReference>
<dbReference type="GO" id="GO:0045202">
    <property type="term" value="C:synapse"/>
    <property type="evidence" value="ECO:0007669"/>
    <property type="project" value="Ensembl"/>
</dbReference>
<dbReference type="GO" id="GO:0031681">
    <property type="term" value="F:G-protein beta-subunit binding"/>
    <property type="evidence" value="ECO:0000318"/>
    <property type="project" value="GO_Central"/>
</dbReference>
<dbReference type="GO" id="GO:0007186">
    <property type="term" value="P:G protein-coupled receptor signaling pathway"/>
    <property type="evidence" value="ECO:0000318"/>
    <property type="project" value="GO_Central"/>
</dbReference>
<dbReference type="GO" id="GO:0030308">
    <property type="term" value="P:negative regulation of cell growth"/>
    <property type="evidence" value="ECO:0000315"/>
    <property type="project" value="BHF-UCL"/>
</dbReference>
<dbReference type="GO" id="GO:0008277">
    <property type="term" value="P:regulation of G protein-coupled receptor signaling pathway"/>
    <property type="evidence" value="ECO:0000304"/>
    <property type="project" value="ProtInc"/>
</dbReference>
<dbReference type="CDD" id="cd00068">
    <property type="entry name" value="GGL"/>
    <property type="match status" value="1"/>
</dbReference>
<dbReference type="FunFam" id="4.10.260.10:FF:000001">
    <property type="entry name" value="Guanine nucleotide-binding protein subunit gamma"/>
    <property type="match status" value="1"/>
</dbReference>
<dbReference type="Gene3D" id="4.10.260.10">
    <property type="entry name" value="Transducin (heterotrimeric G protein), gamma chain"/>
    <property type="match status" value="1"/>
</dbReference>
<dbReference type="InterPro" id="IPR015898">
    <property type="entry name" value="G-protein_gamma-like_dom"/>
</dbReference>
<dbReference type="InterPro" id="IPR036284">
    <property type="entry name" value="GGL_sf"/>
</dbReference>
<dbReference type="InterPro" id="IPR001770">
    <property type="entry name" value="Gprotein-gamma"/>
</dbReference>
<dbReference type="PANTHER" id="PTHR13809">
    <property type="entry name" value="GUANINE NUCLEOTIDE-BINDING PROTEIN GAMMA SUBUNIT"/>
    <property type="match status" value="1"/>
</dbReference>
<dbReference type="Pfam" id="PF00631">
    <property type="entry name" value="G-gamma"/>
    <property type="match status" value="1"/>
</dbReference>
<dbReference type="PRINTS" id="PR00321">
    <property type="entry name" value="GPROTEING"/>
</dbReference>
<dbReference type="SMART" id="SM01224">
    <property type="entry name" value="G_gamma"/>
    <property type="match status" value="1"/>
</dbReference>
<dbReference type="SMART" id="SM00224">
    <property type="entry name" value="GGL"/>
    <property type="match status" value="1"/>
</dbReference>
<dbReference type="SUPFAM" id="SSF48670">
    <property type="entry name" value="Transducin (heterotrimeric G protein), gamma chain"/>
    <property type="match status" value="1"/>
</dbReference>
<dbReference type="PROSITE" id="PS50058">
    <property type="entry name" value="G_PROTEIN_GAMMA"/>
    <property type="match status" value="1"/>
</dbReference>
<reference key="1">
    <citation type="journal article" date="1995" name="J. Biol. Chem.">
        <title>Isolation of cDNA clones encoding eight different human G protein gamma subunits, including three novel forms designated the gamma 4, gamma 10, and gamma 11 subunits.</title>
        <authorList>
            <person name="Ray K."/>
            <person name="Kunsch C."/>
            <person name="Bonner L.M."/>
            <person name="Robishaw J.D."/>
        </authorList>
    </citation>
    <scope>NUCLEOTIDE SEQUENCE [MRNA]</scope>
    <scope>ISOPRENYLATION AT CYS-72</scope>
    <scope>METHYLATION AT CYS-72</scope>
    <scope>SUBUNIT</scope>
</reference>
<reference key="2">
    <citation type="submission" date="2002-03" db="EMBL/GenBank/DDBJ databases">
        <title>cDNA clones of human proteins involved in signal transduction sequenced by the Guthrie cDNA resource center (www.cdna.org).</title>
        <authorList>
            <person name="Puhl H.L. III"/>
            <person name="Ikeda S.R."/>
            <person name="Aronstam R.S."/>
        </authorList>
    </citation>
    <scope>NUCLEOTIDE SEQUENCE [LARGE SCALE MRNA]</scope>
</reference>
<reference key="3">
    <citation type="journal article" date="2004" name="Genome Res.">
        <title>The status, quality, and expansion of the NIH full-length cDNA project: the Mammalian Gene Collection (MGC).</title>
        <authorList>
            <consortium name="The MGC Project Team"/>
        </authorList>
    </citation>
    <scope>NUCLEOTIDE SEQUENCE [LARGE SCALE MRNA]</scope>
    <source>
        <tissue>Brain</tissue>
    </source>
</reference>
<organism>
    <name type="scientific">Homo sapiens</name>
    <name type="common">Human</name>
    <dbReference type="NCBI Taxonomy" id="9606"/>
    <lineage>
        <taxon>Eukaryota</taxon>
        <taxon>Metazoa</taxon>
        <taxon>Chordata</taxon>
        <taxon>Craniata</taxon>
        <taxon>Vertebrata</taxon>
        <taxon>Euteleostomi</taxon>
        <taxon>Mammalia</taxon>
        <taxon>Eutheria</taxon>
        <taxon>Euarchontoglires</taxon>
        <taxon>Primates</taxon>
        <taxon>Haplorrhini</taxon>
        <taxon>Catarrhini</taxon>
        <taxon>Hominidae</taxon>
        <taxon>Homo</taxon>
    </lineage>
</organism>
<gene>
    <name type="primary">GNG4</name>
    <name type="synonym">GNGT4</name>
</gene>
<comment type="function">
    <text evidence="3">Guanine nucleotide-binding proteins (G proteins) are involved as a modulator or transducer in various transmembrane signaling systems. The beta and gamma chains are required for the GTPase activity, for replacement of GDP by GTP, and for G protein-effector interaction.</text>
</comment>
<comment type="subunit">
    <text evidence="1 2">G proteins are composed of 3 units, alpha, beta and gamma. Interacts with beta-1 and beta-2, but not with beta-3 (PubMed:7665596). Interacts with KCNK1 (By similarity). Interacts (via C-terminus) with KCNK2/TREK-1 (via N-terminus); this interaction confers ion selectivity to Cl(-) and L-glutamate.</text>
</comment>
<comment type="interaction">
    <interactant intactId="EBI-6395970">
        <id>P50150</id>
    </interactant>
    <interactant intactId="EBI-701903">
        <id>Q14192</id>
        <label>FHL2</label>
    </interactant>
    <organismsDiffer>false</organismsDiffer>
    <experiments>3</experiments>
</comment>
<comment type="interaction">
    <interactant intactId="EBI-6395970">
        <id>P50150</id>
    </interactant>
    <interactant intactId="EBI-6530063">
        <id>Q920B6</id>
        <label>Kcnk2</label>
    </interactant>
    <organismsDiffer>true</organismsDiffer>
    <experiments>3</experiments>
</comment>
<comment type="subcellular location">
    <subcellularLocation>
        <location evidence="3">Cell membrane</location>
        <topology evidence="3">Lipid-anchor</topology>
        <orientation evidence="3">Cytoplasmic side</orientation>
    </subcellularLocation>
</comment>
<comment type="tissue specificity">
    <text>Brain, kidney, pancreas, skeletal muscle and faintly in cardiac muscle.</text>
</comment>
<comment type="similarity">
    <text evidence="3">Belongs to the G protein gamma family.</text>
</comment>
<name>GBG4_HUMAN</name>
<keyword id="KW-1003">Cell membrane</keyword>
<keyword id="KW-0449">Lipoprotein</keyword>
<keyword id="KW-0472">Membrane</keyword>
<keyword id="KW-0488">Methylation</keyword>
<keyword id="KW-0636">Prenylation</keyword>
<keyword id="KW-1267">Proteomics identification</keyword>
<keyword id="KW-1185">Reference proteome</keyword>
<keyword id="KW-0807">Transducer</keyword>
<sequence>MKEGMSNNSTTSISQARKAVEQLKMEACMDRVKVSQAAADLLAYCEAHVREDPLIIPVPASENPFREKKFFCTIL</sequence>
<evidence type="ECO:0000250" key="1">
    <source>
        <dbReference type="UniProtKB" id="P50153"/>
    </source>
</evidence>
<evidence type="ECO:0000269" key="2">
    <source>
    </source>
</evidence>
<evidence type="ECO:0000305" key="3"/>
<accession>P50150</accession>